<accession>P24103</accession>
<organismHost>
    <name type="scientific">Homo sapiens</name>
    <name type="common">Human</name>
    <dbReference type="NCBI Taxonomy" id="9606"/>
</organismHost>
<sequence>MGASGSKKRSRPLQGLQERLLRARAGTCGECYNALEGESLRSQEGSDREQNSLSCEGQRYQQGDFMNTPWRAPAAEGKKNAYRQQNMDDIDSDDDDLVGVPATPRVPLRTMTYKLAVDMSHFIKEKGGLEGLFYSERRHRILDIYLEKEEGIIADWQNYTSGPGVRYPMFFGWLWKLVPVDTSQEGEDTETDTETHCLLHPAQTSRHDDMHGETLVWKFDSMLALKYEAFTRYPEEFGHKSGLPEDEWKAKLKARGIPFS</sequence>
<gene>
    <name type="primary">nef</name>
</gene>
<protein>
    <recommendedName>
        <fullName>Protein Nef</fullName>
    </recommendedName>
    <alternativeName>
        <fullName>3'ORF</fullName>
    </alternativeName>
    <alternativeName>
        <fullName>Negative factor</fullName>
        <shortName>F-protein</shortName>
    </alternativeName>
</protein>
<name>NEF_HV2CA</name>
<feature type="initiator methionine" description="Removed; by host" evidence="1">
    <location>
        <position position="1"/>
    </location>
</feature>
<feature type="chain" id="PRO_0000085231" description="Protein Nef">
    <location>
        <begin position="2"/>
        <end position="260"/>
    </location>
</feature>
<feature type="region of interest" description="Disordered" evidence="2">
    <location>
        <begin position="39"/>
        <end position="59"/>
    </location>
</feature>
<feature type="region of interest" description="Acidic">
    <location>
        <begin position="88"/>
        <end position="96"/>
    </location>
</feature>
<feature type="region of interest" description="Mediates dimerization" evidence="1">
    <location>
        <begin position="140"/>
        <end position="156"/>
    </location>
</feature>
<feature type="short sequence motif" description="PxxP">
    <location>
        <begin position="104"/>
        <end position="107"/>
    </location>
</feature>
<feature type="compositionally biased region" description="Basic and acidic residues" evidence="2">
    <location>
        <begin position="39"/>
        <end position="50"/>
    </location>
</feature>
<feature type="lipid moiety-binding region" description="N-myristoyl glycine; by host" evidence="1">
    <location>
        <position position="2"/>
    </location>
</feature>
<comment type="function">
    <text evidence="1">Factor of infectivity and pathogenicity, required for optimal virus replication. Alters numerous pathways of T-lymphocyte function and down-regulates immunity surface molecules in order to evade host defense and increase viral infectivity. Alters the functionality of other immunity cells, like dendritic cells, monocytes/macrophages and NK cells. One of the earliest and most abundantly expressed viral proteins (By similarity).</text>
</comment>
<comment type="function">
    <text evidence="1">In infected CD4(+) T-lymphocytes, down-regulates cell surface expression of CD4, CD28, CD3, and MHC-I or MHC-II molecules.</text>
</comment>
<comment type="function">
    <text>Interferes with TCR signaling from the cell membrane. Interacts with CD247/TCRZ (TCR zeta chain) and exert potent down-regulation of cell surface TCR/CD3 complexes.</text>
</comment>
<comment type="function">
    <text evidence="1">Plays a role in optimizing the host cell environment for viral replication without causing cell death by apoptosis. Protects the infected cells from apoptosis in order to keep them alive until the next virus generation is ready to strike (By similarity).</text>
</comment>
<comment type="function">
    <text evidence="1">Extracellular Nef protein targets CD4(+) T-lymphocytes for apoptosis by interacting with CXCR4 surface receptors.</text>
</comment>
<comment type="subunit">
    <text evidence="1">Homodimer. Interacts with host CD247/TCRZ; this interaction induces down-regulation of cell surface TCR/CD3 complexes.</text>
</comment>
<comment type="subcellular location">
    <subcellularLocation>
        <location evidence="1">Host cell membrane</location>
        <topology evidence="1">Lipid-anchor</topology>
        <orientation evidence="1">Cytoplasmic side</orientation>
    </subcellularLocation>
    <text evidence="1">Associates with the inner plasma membrane through its N-terminal domain.</text>
</comment>
<comment type="domain">
    <text evidence="1">The N-terminal domain is composed of the N-myristoyl glycine and of a cluster of positively charged amino acids. It is required for inner plasma membrane targeting of Nef and virion incorporation, and thereby for infectivity (By similarity).</text>
</comment>
<comment type="similarity">
    <text evidence="3">Belongs to the lentivirus primate group Nef protein family.</text>
</comment>
<evidence type="ECO:0000250" key="1"/>
<evidence type="ECO:0000256" key="2">
    <source>
        <dbReference type="SAM" id="MobiDB-lite"/>
    </source>
</evidence>
<evidence type="ECO:0000305" key="3"/>
<reference key="1">
    <citation type="journal article" date="1991" name="J. Gen. Virol.">
        <title>Nucleotide sequence of a Guinea-Bissau-derived human immunodeficiency virus type 2 proviral clone (HIV-2CAM2).</title>
        <authorList>
            <person name="Tristem M."/>
            <person name="Hill F."/>
            <person name="Karpas A."/>
        </authorList>
    </citation>
    <scope>NUCLEOTIDE SEQUENCE [GENOMIC DNA]</scope>
</reference>
<proteinExistence type="inferred from homology"/>
<keyword id="KW-0014">AIDS</keyword>
<keyword id="KW-1032">Host cell membrane</keyword>
<keyword id="KW-1043">Host membrane</keyword>
<keyword id="KW-0945">Host-virus interaction</keyword>
<keyword id="KW-0449">Lipoprotein</keyword>
<keyword id="KW-0472">Membrane</keyword>
<keyword id="KW-0519">Myristate</keyword>
<keyword id="KW-0899">Viral immunoevasion</keyword>
<keyword id="KW-0843">Virulence</keyword>
<dbReference type="EMBL" id="D00835">
    <property type="protein sequence ID" value="BAA00717.1"/>
    <property type="molecule type" value="Genomic_DNA"/>
</dbReference>
<dbReference type="PIR" id="G38475">
    <property type="entry name" value="ASLJCZ"/>
</dbReference>
<dbReference type="SMR" id="P24103"/>
<dbReference type="Proteomes" id="UP000007421">
    <property type="component" value="Segment"/>
</dbReference>
<dbReference type="GO" id="GO:0020002">
    <property type="term" value="C:host cell plasma membrane"/>
    <property type="evidence" value="ECO:0007669"/>
    <property type="project" value="UniProtKB-SubCell"/>
</dbReference>
<dbReference type="GO" id="GO:0016020">
    <property type="term" value="C:membrane"/>
    <property type="evidence" value="ECO:0007669"/>
    <property type="project" value="UniProtKB-KW"/>
</dbReference>
<dbReference type="GO" id="GO:0005525">
    <property type="term" value="F:GTP binding"/>
    <property type="evidence" value="ECO:0007669"/>
    <property type="project" value="InterPro"/>
</dbReference>
<dbReference type="Gene3D" id="3.30.62.10">
    <property type="entry name" value="Nef Regulatory Factor"/>
    <property type="match status" value="1"/>
</dbReference>
<dbReference type="InterPro" id="IPR027481">
    <property type="entry name" value="HIV-1_Nef_core_sf"/>
</dbReference>
<dbReference type="InterPro" id="IPR001558">
    <property type="entry name" value="HIV_Nef"/>
</dbReference>
<dbReference type="Pfam" id="PF00469">
    <property type="entry name" value="F-protein"/>
    <property type="match status" value="1"/>
</dbReference>
<dbReference type="SUPFAM" id="SSF55671">
    <property type="entry name" value="Regulatory factor Nef"/>
    <property type="match status" value="1"/>
</dbReference>
<organism>
    <name type="scientific">Human immunodeficiency virus type 2 subtype A (isolate CAM2)</name>
    <name type="common">HIV-2</name>
    <dbReference type="NCBI Taxonomy" id="11715"/>
    <lineage>
        <taxon>Viruses</taxon>
        <taxon>Riboviria</taxon>
        <taxon>Pararnavirae</taxon>
        <taxon>Artverviricota</taxon>
        <taxon>Revtraviricetes</taxon>
        <taxon>Ortervirales</taxon>
        <taxon>Retroviridae</taxon>
        <taxon>Orthoretrovirinae</taxon>
        <taxon>Lentivirus</taxon>
        <taxon>Human immunodeficiency virus 2</taxon>
    </lineage>
</organism>